<comment type="function">
    <text evidence="1">Protease subunit of a proteasome-like degradation complex believed to be a general protein degrading machinery.</text>
</comment>
<comment type="catalytic activity">
    <reaction evidence="1">
        <text>ATP-dependent cleavage of peptide bonds with broad specificity.</text>
        <dbReference type="EC" id="3.4.25.2"/>
    </reaction>
</comment>
<comment type="activity regulation">
    <text evidence="1">Allosterically activated by HslU binding.</text>
</comment>
<comment type="subunit">
    <text evidence="1">A double ring-shaped homohexamer of HslV is capped on each side by a ring-shaped HslU homohexamer. The assembly of the HslU/HslV complex is dependent on binding of ATP.</text>
</comment>
<comment type="subcellular location">
    <subcellularLocation>
        <location evidence="1">Cytoplasm</location>
    </subcellularLocation>
</comment>
<comment type="induction">
    <text evidence="1">By heat shock.</text>
</comment>
<comment type="similarity">
    <text evidence="1">Belongs to the peptidase T1B family. HslV subfamily.</text>
</comment>
<sequence length="176" mass="18985">MTTIVSVRRNGHVVIAGDGQATLGNTVMKGNVKKVRRLYNDKVIAGFAGGTADAFTLFELFERKLEMHQGHLVKAAVELAKDWRTDRMLRKLEALLAVADETASLIITGNGDVVQPENDLIAIGSGGPYAQAAARALLENTELGAREIAEKALDIAGDICIYTNHFHTIEELTAKA</sequence>
<protein>
    <recommendedName>
        <fullName evidence="1">ATP-dependent protease subunit HslV</fullName>
        <ecNumber evidence="1">3.4.25.2</ecNumber>
    </recommendedName>
    <alternativeName>
        <fullName evidence="1">Heat shock protein HslV</fullName>
    </alternativeName>
</protein>
<organism>
    <name type="scientific">Salmonella newport (strain SL254)</name>
    <dbReference type="NCBI Taxonomy" id="423368"/>
    <lineage>
        <taxon>Bacteria</taxon>
        <taxon>Pseudomonadati</taxon>
        <taxon>Pseudomonadota</taxon>
        <taxon>Gammaproteobacteria</taxon>
        <taxon>Enterobacterales</taxon>
        <taxon>Enterobacteriaceae</taxon>
        <taxon>Salmonella</taxon>
    </lineage>
</organism>
<reference key="1">
    <citation type="journal article" date="2011" name="J. Bacteriol.">
        <title>Comparative genomics of 28 Salmonella enterica isolates: evidence for CRISPR-mediated adaptive sublineage evolution.</title>
        <authorList>
            <person name="Fricke W.F."/>
            <person name="Mammel M.K."/>
            <person name="McDermott P.F."/>
            <person name="Tartera C."/>
            <person name="White D.G."/>
            <person name="Leclerc J.E."/>
            <person name="Ravel J."/>
            <person name="Cebula T.A."/>
        </authorList>
    </citation>
    <scope>NUCLEOTIDE SEQUENCE [LARGE SCALE GENOMIC DNA]</scope>
    <source>
        <strain>SL254</strain>
    </source>
</reference>
<feature type="chain" id="PRO_1000100913" description="ATP-dependent protease subunit HslV">
    <location>
        <begin position="1"/>
        <end position="176"/>
    </location>
</feature>
<feature type="active site" evidence="1">
    <location>
        <position position="2"/>
    </location>
</feature>
<feature type="binding site" evidence="1">
    <location>
        <position position="157"/>
    </location>
    <ligand>
        <name>Na(+)</name>
        <dbReference type="ChEBI" id="CHEBI:29101"/>
    </ligand>
</feature>
<feature type="binding site" evidence="1">
    <location>
        <position position="160"/>
    </location>
    <ligand>
        <name>Na(+)</name>
        <dbReference type="ChEBI" id="CHEBI:29101"/>
    </ligand>
</feature>
<feature type="binding site" evidence="1">
    <location>
        <position position="163"/>
    </location>
    <ligand>
        <name>Na(+)</name>
        <dbReference type="ChEBI" id="CHEBI:29101"/>
    </ligand>
</feature>
<proteinExistence type="inferred from homology"/>
<evidence type="ECO:0000255" key="1">
    <source>
        <dbReference type="HAMAP-Rule" id="MF_00248"/>
    </source>
</evidence>
<dbReference type="EC" id="3.4.25.2" evidence="1"/>
<dbReference type="EMBL" id="CP001113">
    <property type="protein sequence ID" value="ACF65568.1"/>
    <property type="molecule type" value="Genomic_DNA"/>
</dbReference>
<dbReference type="RefSeq" id="WP_000208240.1">
    <property type="nucleotide sequence ID" value="NZ_CCMR01000001.1"/>
</dbReference>
<dbReference type="SMR" id="B4T0T9"/>
<dbReference type="MEROPS" id="T01.006"/>
<dbReference type="KEGG" id="see:SNSL254_A4422"/>
<dbReference type="HOGENOM" id="CLU_093872_1_0_6"/>
<dbReference type="Proteomes" id="UP000008824">
    <property type="component" value="Chromosome"/>
</dbReference>
<dbReference type="GO" id="GO:0009376">
    <property type="term" value="C:HslUV protease complex"/>
    <property type="evidence" value="ECO:0007669"/>
    <property type="project" value="UniProtKB-UniRule"/>
</dbReference>
<dbReference type="GO" id="GO:0005839">
    <property type="term" value="C:proteasome core complex"/>
    <property type="evidence" value="ECO:0007669"/>
    <property type="project" value="InterPro"/>
</dbReference>
<dbReference type="GO" id="GO:0046872">
    <property type="term" value="F:metal ion binding"/>
    <property type="evidence" value="ECO:0007669"/>
    <property type="project" value="UniProtKB-KW"/>
</dbReference>
<dbReference type="GO" id="GO:0004298">
    <property type="term" value="F:threonine-type endopeptidase activity"/>
    <property type="evidence" value="ECO:0007669"/>
    <property type="project" value="UniProtKB-KW"/>
</dbReference>
<dbReference type="GO" id="GO:0051603">
    <property type="term" value="P:proteolysis involved in protein catabolic process"/>
    <property type="evidence" value="ECO:0007669"/>
    <property type="project" value="InterPro"/>
</dbReference>
<dbReference type="CDD" id="cd01913">
    <property type="entry name" value="protease_HslV"/>
    <property type="match status" value="1"/>
</dbReference>
<dbReference type="FunFam" id="3.60.20.10:FF:000002">
    <property type="entry name" value="ATP-dependent protease subunit HslV"/>
    <property type="match status" value="1"/>
</dbReference>
<dbReference type="Gene3D" id="3.60.20.10">
    <property type="entry name" value="Glutamine Phosphoribosylpyrophosphate, subunit 1, domain 1"/>
    <property type="match status" value="1"/>
</dbReference>
<dbReference type="HAMAP" id="MF_00248">
    <property type="entry name" value="HslV"/>
    <property type="match status" value="1"/>
</dbReference>
<dbReference type="InterPro" id="IPR022281">
    <property type="entry name" value="ATP-dep_Prtase_HsIV_su"/>
</dbReference>
<dbReference type="InterPro" id="IPR029055">
    <property type="entry name" value="Ntn_hydrolases_N"/>
</dbReference>
<dbReference type="InterPro" id="IPR001353">
    <property type="entry name" value="Proteasome_sua/b"/>
</dbReference>
<dbReference type="InterPro" id="IPR023333">
    <property type="entry name" value="Proteasome_suB-type"/>
</dbReference>
<dbReference type="NCBIfam" id="TIGR03692">
    <property type="entry name" value="ATP_dep_HslV"/>
    <property type="match status" value="1"/>
</dbReference>
<dbReference type="NCBIfam" id="NF003964">
    <property type="entry name" value="PRK05456.1"/>
    <property type="match status" value="1"/>
</dbReference>
<dbReference type="PANTHER" id="PTHR32194:SF0">
    <property type="entry name" value="ATP-DEPENDENT PROTEASE SUBUNIT HSLV"/>
    <property type="match status" value="1"/>
</dbReference>
<dbReference type="PANTHER" id="PTHR32194">
    <property type="entry name" value="METALLOPROTEASE TLDD"/>
    <property type="match status" value="1"/>
</dbReference>
<dbReference type="Pfam" id="PF00227">
    <property type="entry name" value="Proteasome"/>
    <property type="match status" value="1"/>
</dbReference>
<dbReference type="PIRSF" id="PIRSF039093">
    <property type="entry name" value="HslV"/>
    <property type="match status" value="1"/>
</dbReference>
<dbReference type="SUPFAM" id="SSF56235">
    <property type="entry name" value="N-terminal nucleophile aminohydrolases (Ntn hydrolases)"/>
    <property type="match status" value="1"/>
</dbReference>
<dbReference type="PROSITE" id="PS51476">
    <property type="entry name" value="PROTEASOME_BETA_2"/>
    <property type="match status" value="1"/>
</dbReference>
<accession>B4T0T9</accession>
<gene>
    <name evidence="1" type="primary">hslV</name>
    <name type="ordered locus">SNSL254_A4422</name>
</gene>
<name>HSLV_SALNS</name>
<keyword id="KW-0021">Allosteric enzyme</keyword>
<keyword id="KW-0963">Cytoplasm</keyword>
<keyword id="KW-0378">Hydrolase</keyword>
<keyword id="KW-0479">Metal-binding</keyword>
<keyword id="KW-0645">Protease</keyword>
<keyword id="KW-0915">Sodium</keyword>
<keyword id="KW-0346">Stress response</keyword>
<keyword id="KW-0888">Threonine protease</keyword>